<comment type="function">
    <text evidence="1">Component of the cytochrome b6-f complex, which mediates electron transfer between photosystem II (PSII) and photosystem I (PSI), cyclic electron flow around PSI, and state transitions.</text>
</comment>
<comment type="subunit">
    <text evidence="1">The 4 large subunits of the cytochrome b6-f complex are cytochrome b6, subunit IV (17 kDa polypeptide, PetD), cytochrome f and the Rieske protein, while the 4 small subunits are PetG, PetL, PetM and PetN. The complex functions as a dimer.</text>
</comment>
<comment type="subcellular location">
    <subcellularLocation>
        <location evidence="1">Cellular thylakoid membrane</location>
        <topology evidence="1">Multi-pass membrane protein</topology>
    </subcellularLocation>
</comment>
<comment type="similarity">
    <text evidence="1">Belongs to the cytochrome b family. PetD subfamily.</text>
</comment>
<dbReference type="EMBL" id="J03967">
    <property type="protein sequence ID" value="AAA23331.1"/>
    <property type="molecule type" value="Genomic_DNA"/>
</dbReference>
<dbReference type="SMR" id="P12117"/>
<dbReference type="GO" id="GO:0031676">
    <property type="term" value="C:plasma membrane-derived thylakoid membrane"/>
    <property type="evidence" value="ECO:0007669"/>
    <property type="project" value="UniProtKB-SubCell"/>
</dbReference>
<dbReference type="GO" id="GO:0045158">
    <property type="term" value="F:electron transporter, transferring electrons within cytochrome b6/f complex of photosystem II activity"/>
    <property type="evidence" value="ECO:0007669"/>
    <property type="project" value="UniProtKB-UniRule"/>
</dbReference>
<dbReference type="GO" id="GO:0045156">
    <property type="term" value="F:electron transporter, transferring electrons within the cyclic electron transport pathway of photosynthesis activity"/>
    <property type="evidence" value="ECO:0007669"/>
    <property type="project" value="InterPro"/>
</dbReference>
<dbReference type="GO" id="GO:0016491">
    <property type="term" value="F:oxidoreductase activity"/>
    <property type="evidence" value="ECO:0007669"/>
    <property type="project" value="InterPro"/>
</dbReference>
<dbReference type="GO" id="GO:0009767">
    <property type="term" value="P:photosynthetic electron transport chain"/>
    <property type="evidence" value="ECO:0007669"/>
    <property type="project" value="InterPro"/>
</dbReference>
<dbReference type="CDD" id="cd00290">
    <property type="entry name" value="cytochrome_b_C"/>
    <property type="match status" value="1"/>
</dbReference>
<dbReference type="FunFam" id="1.10.287.980:FF:000001">
    <property type="entry name" value="Cytochrome b6-f complex subunit 4"/>
    <property type="match status" value="1"/>
</dbReference>
<dbReference type="FunFam" id="1.20.5.510:FF:000002">
    <property type="entry name" value="Cytochrome b6-f complex subunit 4"/>
    <property type="match status" value="1"/>
</dbReference>
<dbReference type="Gene3D" id="1.10.287.980">
    <property type="entry name" value="plastocyanin oxidoreductase"/>
    <property type="match status" value="1"/>
</dbReference>
<dbReference type="Gene3D" id="1.20.5.510">
    <property type="entry name" value="Single helix bin"/>
    <property type="match status" value="1"/>
</dbReference>
<dbReference type="HAMAP" id="MF_01344">
    <property type="entry name" value="Cytb6_f_subIV"/>
    <property type="match status" value="1"/>
</dbReference>
<dbReference type="InterPro" id="IPR005798">
    <property type="entry name" value="Cyt_b/b6_C"/>
</dbReference>
<dbReference type="InterPro" id="IPR036150">
    <property type="entry name" value="Cyt_b/b6_C_sf"/>
</dbReference>
<dbReference type="InterPro" id="IPR005870">
    <property type="entry name" value="Cyt_b6/f_cplx_suIV"/>
</dbReference>
<dbReference type="InterPro" id="IPR048260">
    <property type="entry name" value="Cytochrome_b_C_euk/bac"/>
</dbReference>
<dbReference type="NCBIfam" id="TIGR01156">
    <property type="entry name" value="cytb6_f_IV"/>
    <property type="match status" value="1"/>
</dbReference>
<dbReference type="PANTHER" id="PTHR19271">
    <property type="entry name" value="CYTOCHROME B"/>
    <property type="match status" value="1"/>
</dbReference>
<dbReference type="PANTHER" id="PTHR19271:SF40">
    <property type="entry name" value="CYTOCHROME B"/>
    <property type="match status" value="1"/>
</dbReference>
<dbReference type="Pfam" id="PF00032">
    <property type="entry name" value="Cytochrom_B_C"/>
    <property type="match status" value="1"/>
</dbReference>
<dbReference type="PIRSF" id="PIRSF000033">
    <property type="entry name" value="B6f_17K"/>
    <property type="match status" value="1"/>
</dbReference>
<dbReference type="SUPFAM" id="SSF81648">
    <property type="entry name" value="a domain/subunit of cytochrome bc1 complex (Ubiquinol-cytochrome c reductase)"/>
    <property type="match status" value="1"/>
</dbReference>
<dbReference type="PROSITE" id="PS51003">
    <property type="entry name" value="CYTB_CTER"/>
    <property type="match status" value="1"/>
</dbReference>
<keyword id="KW-0249">Electron transport</keyword>
<keyword id="KW-0472">Membrane</keyword>
<keyword id="KW-0602">Photosynthesis</keyword>
<keyword id="KW-0793">Thylakoid</keyword>
<keyword id="KW-0812">Transmembrane</keyword>
<keyword id="KW-1133">Transmembrane helix</keyword>
<keyword id="KW-0813">Transport</keyword>
<protein>
    <recommendedName>
        <fullName evidence="1">Cytochrome b6-f complex subunit 4</fullName>
    </recommendedName>
    <alternativeName>
        <fullName evidence="1">17 kDa polypeptide</fullName>
    </alternativeName>
</protein>
<organism>
    <name type="scientific">Desmonostoc sp. (strain PCC 7906)</name>
    <name type="common">Nostoc sp. (strain PCC 7906)</name>
    <dbReference type="NCBI Taxonomy" id="1181"/>
    <lineage>
        <taxon>Bacteria</taxon>
        <taxon>Bacillati</taxon>
        <taxon>Cyanobacteriota</taxon>
        <taxon>Cyanophyceae</taxon>
        <taxon>Nostocales</taxon>
        <taxon>Nostocaceae</taxon>
        <taxon>Desmonostoc</taxon>
    </lineage>
</organism>
<name>PETD_DESSP</name>
<sequence>MATQKKPDLSDPQLRAKLAKGMGHNYYGEPAWPNDLLYVFPIVIMGSFAAIVALAVLDPAMTGEPANPFATPLEILPEWYLYPVFQILRSLPNKLLGVLAMASVPLGLILVPFIENVNKFQNPFRRPVATTVFLFGTLVTLWLGIGAALPLDKSLTLGLF</sequence>
<evidence type="ECO:0000255" key="1">
    <source>
        <dbReference type="HAMAP-Rule" id="MF_01344"/>
    </source>
</evidence>
<accession>P12117</accession>
<gene>
    <name evidence="1" type="primary">petD</name>
</gene>
<reference key="1">
    <citation type="journal article" date="1988" name="J. Biol. Chem.">
        <title>Characterization of two operons encoding the cytochrome b6-f complex of the cyanobacterium Nostoc PCC 7906. Highly conserved sequences but different gene organization than in chloroplasts.</title>
        <authorList>
            <person name="Kallas T."/>
            <person name="Spiller S."/>
            <person name="Malkin R."/>
        </authorList>
    </citation>
    <scope>NUCLEOTIDE SEQUENCE [GENOMIC DNA]</scope>
</reference>
<proteinExistence type="inferred from homology"/>
<feature type="chain" id="PRO_0000061902" description="Cytochrome b6-f complex subunit 4">
    <location>
        <begin position="1"/>
        <end position="160"/>
    </location>
</feature>
<feature type="transmembrane region" description="Helical" evidence="1">
    <location>
        <begin position="36"/>
        <end position="56"/>
    </location>
</feature>
<feature type="transmembrane region" description="Helical" evidence="1">
    <location>
        <begin position="95"/>
        <end position="115"/>
    </location>
</feature>
<feature type="transmembrane region" description="Helical" evidence="1">
    <location>
        <begin position="131"/>
        <end position="151"/>
    </location>
</feature>